<keyword id="KW-0963">Cytoplasm</keyword>
<keyword id="KW-0274">FAD</keyword>
<keyword id="KW-0285">Flavoprotein</keyword>
<keyword id="KW-0547">Nucleotide-binding</keyword>
<keyword id="KW-0560">Oxidoreductase</keyword>
<keyword id="KW-0662">Pyridine nucleotide biosynthesis</keyword>
<keyword id="KW-1185">Reference proteome</keyword>
<name>NADB_VIBCH</name>
<proteinExistence type="inferred from homology"/>
<evidence type="ECO:0000250" key="1">
    <source>
        <dbReference type="UniProtKB" id="P10902"/>
    </source>
</evidence>
<evidence type="ECO:0000305" key="2"/>
<dbReference type="EC" id="1.4.3.16" evidence="1"/>
<dbReference type="EMBL" id="AE003852">
    <property type="protein sequence ID" value="AAF95611.1"/>
    <property type="status" value="ALT_INIT"/>
    <property type="molecule type" value="Genomic_DNA"/>
</dbReference>
<dbReference type="PIR" id="B82074">
    <property type="entry name" value="B82074"/>
</dbReference>
<dbReference type="RefSeq" id="NP_232098.1">
    <property type="nucleotide sequence ID" value="NC_002505.1"/>
</dbReference>
<dbReference type="RefSeq" id="WP_001918879.1">
    <property type="nucleotide sequence ID" value="NZ_LT906614.1"/>
</dbReference>
<dbReference type="SMR" id="Q9KPA4"/>
<dbReference type="STRING" id="243277.VC_2469"/>
<dbReference type="DNASU" id="2613011"/>
<dbReference type="EnsemblBacteria" id="AAF95611">
    <property type="protein sequence ID" value="AAF95611"/>
    <property type="gene ID" value="VC_2469"/>
</dbReference>
<dbReference type="KEGG" id="vch:VC_2469"/>
<dbReference type="PATRIC" id="fig|243277.26.peg.2353"/>
<dbReference type="eggNOG" id="COG0029">
    <property type="taxonomic scope" value="Bacteria"/>
</dbReference>
<dbReference type="HOGENOM" id="CLU_014312_3_0_6"/>
<dbReference type="UniPathway" id="UPA00253">
    <property type="reaction ID" value="UER00326"/>
</dbReference>
<dbReference type="Proteomes" id="UP000000584">
    <property type="component" value="Chromosome 1"/>
</dbReference>
<dbReference type="GO" id="GO:0005737">
    <property type="term" value="C:cytoplasm"/>
    <property type="evidence" value="ECO:0007669"/>
    <property type="project" value="UniProtKB-SubCell"/>
</dbReference>
<dbReference type="GO" id="GO:0008734">
    <property type="term" value="F:L-aspartate oxidase activity"/>
    <property type="evidence" value="ECO:0000318"/>
    <property type="project" value="GO_Central"/>
</dbReference>
<dbReference type="GO" id="GO:0000166">
    <property type="term" value="F:nucleotide binding"/>
    <property type="evidence" value="ECO:0007669"/>
    <property type="project" value="UniProtKB-KW"/>
</dbReference>
<dbReference type="GO" id="GO:0034628">
    <property type="term" value="P:'de novo' NAD biosynthetic process from L-aspartate"/>
    <property type="evidence" value="ECO:0000318"/>
    <property type="project" value="GO_Central"/>
</dbReference>
<dbReference type="FunFam" id="1.20.58.100:FF:000002">
    <property type="entry name" value="L-aspartate oxidase"/>
    <property type="match status" value="1"/>
</dbReference>
<dbReference type="FunFam" id="3.50.50.60:FF:000060">
    <property type="entry name" value="L-aspartate oxidase"/>
    <property type="match status" value="1"/>
</dbReference>
<dbReference type="FunFam" id="3.90.700.10:FF:000002">
    <property type="entry name" value="L-aspartate oxidase"/>
    <property type="match status" value="1"/>
</dbReference>
<dbReference type="Gene3D" id="3.50.50.60">
    <property type="entry name" value="FAD/NAD(P)-binding domain"/>
    <property type="match status" value="1"/>
</dbReference>
<dbReference type="Gene3D" id="1.20.58.100">
    <property type="entry name" value="Fumarate reductase/succinate dehydrogenase flavoprotein-like, C-terminal domain"/>
    <property type="match status" value="1"/>
</dbReference>
<dbReference type="Gene3D" id="3.90.700.10">
    <property type="entry name" value="Succinate dehydrogenase/fumarate reductase flavoprotein, catalytic domain"/>
    <property type="match status" value="1"/>
</dbReference>
<dbReference type="InterPro" id="IPR003953">
    <property type="entry name" value="FAD-dep_OxRdtase_2_FAD-bd"/>
</dbReference>
<dbReference type="InterPro" id="IPR036188">
    <property type="entry name" value="FAD/NAD-bd_sf"/>
</dbReference>
<dbReference type="InterPro" id="IPR037099">
    <property type="entry name" value="Fum_R/Succ_DH_flav-like_C_sf"/>
</dbReference>
<dbReference type="InterPro" id="IPR015939">
    <property type="entry name" value="Fum_Rdtase/Succ_DH_flav-like_C"/>
</dbReference>
<dbReference type="InterPro" id="IPR005288">
    <property type="entry name" value="NadB"/>
</dbReference>
<dbReference type="InterPro" id="IPR027477">
    <property type="entry name" value="Succ_DH/fumarate_Rdtase_cat_sf"/>
</dbReference>
<dbReference type="NCBIfam" id="TIGR00551">
    <property type="entry name" value="nadB"/>
    <property type="match status" value="1"/>
</dbReference>
<dbReference type="NCBIfam" id="NF006567">
    <property type="entry name" value="PRK09077.1"/>
    <property type="match status" value="1"/>
</dbReference>
<dbReference type="PANTHER" id="PTHR42716">
    <property type="entry name" value="L-ASPARTATE OXIDASE"/>
    <property type="match status" value="1"/>
</dbReference>
<dbReference type="PANTHER" id="PTHR42716:SF2">
    <property type="entry name" value="L-ASPARTATE OXIDASE, CHLOROPLASTIC"/>
    <property type="match status" value="1"/>
</dbReference>
<dbReference type="Pfam" id="PF00890">
    <property type="entry name" value="FAD_binding_2"/>
    <property type="match status" value="1"/>
</dbReference>
<dbReference type="Pfam" id="PF02910">
    <property type="entry name" value="Succ_DH_flav_C"/>
    <property type="match status" value="1"/>
</dbReference>
<dbReference type="PIRSF" id="PIRSF000171">
    <property type="entry name" value="SDHA_APRA_LASPO"/>
    <property type="match status" value="1"/>
</dbReference>
<dbReference type="PRINTS" id="PR00368">
    <property type="entry name" value="FADPNR"/>
</dbReference>
<dbReference type="PRINTS" id="PR00411">
    <property type="entry name" value="PNDRDTASEI"/>
</dbReference>
<dbReference type="SUPFAM" id="SSF51905">
    <property type="entry name" value="FAD/NAD(P)-binding domain"/>
    <property type="match status" value="1"/>
</dbReference>
<dbReference type="SUPFAM" id="SSF46977">
    <property type="entry name" value="Succinate dehydrogenase/fumarate reductase flavoprotein C-terminal domain"/>
    <property type="match status" value="1"/>
</dbReference>
<dbReference type="SUPFAM" id="SSF56425">
    <property type="entry name" value="Succinate dehydrogenase/fumarate reductase flavoprotein, catalytic domain"/>
    <property type="match status" value="1"/>
</dbReference>
<protein>
    <recommendedName>
        <fullName evidence="1">L-aspartate oxidase</fullName>
        <shortName evidence="1">LASPO</shortName>
        <ecNumber evidence="1">1.4.3.16</ecNumber>
    </recommendedName>
    <alternativeName>
        <fullName>Quinolinate synthase B</fullName>
    </alternativeName>
</protein>
<feature type="chain" id="PRO_0000184403" description="L-aspartate oxidase">
    <location>
        <begin position="1"/>
        <end position="535"/>
    </location>
</feature>
<feature type="active site" description="Proton donor/acceptor" evidence="1">
    <location>
        <position position="290"/>
    </location>
</feature>
<feature type="binding site" evidence="1">
    <location>
        <begin position="16"/>
        <end position="19"/>
    </location>
    <ligand>
        <name>FAD</name>
        <dbReference type="ChEBI" id="CHEBI:57692"/>
    </ligand>
</feature>
<feature type="binding site" evidence="1">
    <location>
        <position position="38"/>
    </location>
    <ligand>
        <name>FAD</name>
        <dbReference type="ChEBI" id="CHEBI:57692"/>
    </ligand>
</feature>
<feature type="binding site" evidence="1">
    <location>
        <begin position="45"/>
        <end position="52"/>
    </location>
    <ligand>
        <name>FAD</name>
        <dbReference type="ChEBI" id="CHEBI:57692"/>
    </ligand>
</feature>
<feature type="binding site" evidence="1">
    <location>
        <position position="223"/>
    </location>
    <ligand>
        <name>FAD</name>
        <dbReference type="ChEBI" id="CHEBI:57692"/>
    </ligand>
</feature>
<feature type="binding site" evidence="1">
    <location>
        <position position="375"/>
    </location>
    <ligand>
        <name>FAD</name>
        <dbReference type="ChEBI" id="CHEBI:57692"/>
    </ligand>
</feature>
<feature type="binding site" evidence="1">
    <location>
        <begin position="391"/>
        <end position="392"/>
    </location>
    <ligand>
        <name>FAD</name>
        <dbReference type="ChEBI" id="CHEBI:57692"/>
    </ligand>
</feature>
<feature type="site" description="Important in orienting the L-aspartate substrate" evidence="1">
    <location>
        <position position="122"/>
    </location>
</feature>
<organism>
    <name type="scientific">Vibrio cholerae serotype O1 (strain ATCC 39315 / El Tor Inaba N16961)</name>
    <dbReference type="NCBI Taxonomy" id="243277"/>
    <lineage>
        <taxon>Bacteria</taxon>
        <taxon>Pseudomonadati</taxon>
        <taxon>Pseudomonadota</taxon>
        <taxon>Gammaproteobacteria</taxon>
        <taxon>Vibrionales</taxon>
        <taxon>Vibrionaceae</taxon>
        <taxon>Vibrio</taxon>
    </lineage>
</organism>
<comment type="function">
    <text evidence="1">Catalyzes the oxidation of L-aspartate to iminoaspartate, the first step in the de novo biosynthesis of NAD(+).</text>
</comment>
<comment type="catalytic activity">
    <reaction evidence="1">
        <text>L-aspartate + O2 = iminosuccinate + H2O2</text>
        <dbReference type="Rhea" id="RHEA:25876"/>
        <dbReference type="ChEBI" id="CHEBI:15379"/>
        <dbReference type="ChEBI" id="CHEBI:16240"/>
        <dbReference type="ChEBI" id="CHEBI:29991"/>
        <dbReference type="ChEBI" id="CHEBI:77875"/>
        <dbReference type="EC" id="1.4.3.16"/>
    </reaction>
    <physiologicalReaction direction="left-to-right" evidence="1">
        <dbReference type="Rhea" id="RHEA:25877"/>
    </physiologicalReaction>
</comment>
<comment type="cofactor">
    <cofactor evidence="1">
        <name>FAD</name>
        <dbReference type="ChEBI" id="CHEBI:57692"/>
    </cofactor>
    <text evidence="1">Binds 1 FAD per subunit.</text>
</comment>
<comment type="pathway">
    <text evidence="1">Cofactor biosynthesis; NAD(+) biosynthesis; iminoaspartate from L-aspartate (oxidase route): step 1/1.</text>
</comment>
<comment type="subcellular location">
    <subcellularLocation>
        <location evidence="1">Cytoplasm</location>
    </subcellularLocation>
</comment>
<comment type="similarity">
    <text evidence="2">Belongs to the FAD-dependent oxidoreductase 2 family. NadB subfamily.</text>
</comment>
<comment type="sequence caution" evidence="2">
    <conflict type="erroneous initiation">
        <sequence resource="EMBL-CDS" id="AAF95611"/>
    </conflict>
</comment>
<sequence length="535" mass="59873">MNADREHQCDVLVIGSGAAGLSLALQVAQYGKVIVLSKGPRSEGATFYAQGGIAAVFDESDSIESHVQDTLIAGAGICDEQTVRFIAEHAKECVQWLIDGGVPFDKEEDSDNDHPRYHLTREGGHSHRRILHAADATGMAMQTSLQDNAHNHPNITVLERHNALDLITEDKIGGDANKVVGAYVWNRNAEHVETIRAKFVVLATGGASKVYQYTSNPDVSSGDGIAMAWRAGCRVANLEFNQFHPTCLYHPEARNFLLTEALRGEGAYLRRPDGSRFMPDFDERAELAPRDIVARAIDFEMKRLGADCMYLDISHKPADFIEKHFPTIYSRLMDLGIDMTKEPIPIVPAAHYTCGGVMVNPQGQTDLKQLYAIGEVSYTGLHGANRMASNSLLECVVYAWSASQDIIAQLPNASMPESLPAWDESQVTCSDEEVVLQHNWHELRLFMWDYMGIVRTNKRLERAMRRIQLLQQETHEYYSNFRVSNNLLEMRNLLQVAELMVRCAMQRKESRGLHYTLDYPDQLAESGPTILVPEK</sequence>
<reference key="1">
    <citation type="journal article" date="2000" name="Nature">
        <title>DNA sequence of both chromosomes of the cholera pathogen Vibrio cholerae.</title>
        <authorList>
            <person name="Heidelberg J.F."/>
            <person name="Eisen J.A."/>
            <person name="Nelson W.C."/>
            <person name="Clayton R.A."/>
            <person name="Gwinn M.L."/>
            <person name="Dodson R.J."/>
            <person name="Haft D.H."/>
            <person name="Hickey E.K."/>
            <person name="Peterson J.D."/>
            <person name="Umayam L.A."/>
            <person name="Gill S.R."/>
            <person name="Nelson K.E."/>
            <person name="Read T.D."/>
            <person name="Tettelin H."/>
            <person name="Richardson D.L."/>
            <person name="Ermolaeva M.D."/>
            <person name="Vamathevan J.J."/>
            <person name="Bass S."/>
            <person name="Qin H."/>
            <person name="Dragoi I."/>
            <person name="Sellers P."/>
            <person name="McDonald L.A."/>
            <person name="Utterback T.R."/>
            <person name="Fleischmann R.D."/>
            <person name="Nierman W.C."/>
            <person name="White O."/>
            <person name="Salzberg S.L."/>
            <person name="Smith H.O."/>
            <person name="Colwell R.R."/>
            <person name="Mekalanos J.J."/>
            <person name="Venter J.C."/>
            <person name="Fraser C.M."/>
        </authorList>
    </citation>
    <scope>NUCLEOTIDE SEQUENCE [LARGE SCALE GENOMIC DNA]</scope>
    <source>
        <strain>ATCC 39315 / El Tor Inaba N16961</strain>
    </source>
</reference>
<gene>
    <name type="primary">nadB</name>
    <name type="ordered locus">VC_2469</name>
</gene>
<accession>Q9KPA4</accession>